<comment type="function">
    <text evidence="1">Suppressor of IKK-epsilon (By similarity). Associates with the striatin-interacting phosphatase and kinase (STRIPAK) core complex, forming the extended (SIKE1:SLMAP)STRIPAK complex. The (SIKE1:SLMAP)STRIPAK complex dephosphorylates STK3 leading to the inhibition of Hippo signaling and the control of cell growth (By similarity).</text>
</comment>
<comment type="subunit">
    <text evidence="1">Interacts with IKBKE and TBK1 via its coiled coil region. Interaction with TBK1 is disrupted upon viral infection or TLR3 stimulation. Interacts with CDC42BPB. Associates with the STRIPAK core complex composed of PP2A catalytic and scaffolding subunits, the striatins (PP2A regulatory subunits), the striatin-associated proteins MOB4, STRIP1 and STRIP2, PDCD10 and members of the STE20 kinases, such as STK24 and STK26.</text>
</comment>
<comment type="subcellular location">
    <subcellularLocation>
        <location evidence="1">Cytoplasm</location>
    </subcellularLocation>
</comment>
<comment type="similarity">
    <text evidence="3">Belongs to the SIKE family.</text>
</comment>
<keyword id="KW-0175">Coiled coil</keyword>
<keyword id="KW-0963">Cytoplasm</keyword>
<keyword id="KW-1185">Reference proteome</keyword>
<proteinExistence type="evidence at transcript level"/>
<name>SIKE1_XENLA</name>
<sequence>MTCTIDKILQDAKTLLERLKDHDNAAESLIDQSSVLHKRVKAMKEVGTAMPEKYQEELAEIKDASKLRPHVLLCQENTQIRDLQLENKELWLSLEEHQYALELIMSKYRKQMLQLIANKIPAPTEPVLEAHKTFSSDLECQIDRICVIGDAMRKAIQLDEDQAYNIQERLAQLELENKELREILSVRNESLRSSKKESEWNFSEK</sequence>
<gene>
    <name type="primary">sike1</name>
    <name type="synonym">sike</name>
</gene>
<reference key="1">
    <citation type="submission" date="2004-06" db="EMBL/GenBank/DDBJ databases">
        <authorList>
            <consortium name="NIH - Xenopus Gene Collection (XGC) project"/>
        </authorList>
    </citation>
    <scope>NUCLEOTIDE SEQUENCE [LARGE SCALE MRNA]</scope>
    <source>
        <tissue>Spleen</tissue>
    </source>
</reference>
<accession>Q6GP65</accession>
<dbReference type="EMBL" id="BC073278">
    <property type="protein sequence ID" value="AAH73278.1"/>
    <property type="molecule type" value="mRNA"/>
</dbReference>
<dbReference type="RefSeq" id="NP_001085744.1">
    <property type="nucleotide sequence ID" value="NM_001092275.1"/>
</dbReference>
<dbReference type="SMR" id="Q6GP65"/>
<dbReference type="DNASU" id="444171"/>
<dbReference type="GeneID" id="444171"/>
<dbReference type="KEGG" id="xla:444171"/>
<dbReference type="AGR" id="Xenbase:XB-GENE-1003391"/>
<dbReference type="CTD" id="444171"/>
<dbReference type="Xenbase" id="XB-GENE-1003391">
    <property type="gene designation" value="sike1.L"/>
</dbReference>
<dbReference type="OrthoDB" id="21214at2759"/>
<dbReference type="Proteomes" id="UP000186698">
    <property type="component" value="Chromosome 2L"/>
</dbReference>
<dbReference type="Bgee" id="444171">
    <property type="expression patterns" value="Expressed in muscle tissue and 19 other cell types or tissues"/>
</dbReference>
<dbReference type="GO" id="GO:0005737">
    <property type="term" value="C:cytoplasm"/>
    <property type="evidence" value="ECO:0007669"/>
    <property type="project" value="UniProtKB-SubCell"/>
</dbReference>
<dbReference type="GO" id="GO:0090443">
    <property type="term" value="C:FAR/SIN/STRIPAK complex"/>
    <property type="evidence" value="ECO:0000250"/>
    <property type="project" value="UniProtKB"/>
</dbReference>
<dbReference type="GO" id="GO:0030674">
    <property type="term" value="F:protein-macromolecule adaptor activity"/>
    <property type="evidence" value="ECO:0000250"/>
    <property type="project" value="UniProtKB"/>
</dbReference>
<dbReference type="GO" id="GO:0035331">
    <property type="term" value="P:negative regulation of hippo signaling"/>
    <property type="evidence" value="ECO:0000250"/>
    <property type="project" value="UniProtKB"/>
</dbReference>
<dbReference type="InterPro" id="IPR008555">
    <property type="entry name" value="SIKE"/>
</dbReference>
<dbReference type="PANTHER" id="PTHR12186">
    <property type="entry name" value="SIKE FAMILY MEMBER"/>
    <property type="match status" value="1"/>
</dbReference>
<dbReference type="PANTHER" id="PTHR12186:SF4">
    <property type="entry name" value="SUPPRESSOR OF IKBKE 1"/>
    <property type="match status" value="1"/>
</dbReference>
<dbReference type="Pfam" id="PF05769">
    <property type="entry name" value="SIKE"/>
    <property type="match status" value="1"/>
</dbReference>
<organism>
    <name type="scientific">Xenopus laevis</name>
    <name type="common">African clawed frog</name>
    <dbReference type="NCBI Taxonomy" id="8355"/>
    <lineage>
        <taxon>Eukaryota</taxon>
        <taxon>Metazoa</taxon>
        <taxon>Chordata</taxon>
        <taxon>Craniata</taxon>
        <taxon>Vertebrata</taxon>
        <taxon>Euteleostomi</taxon>
        <taxon>Amphibia</taxon>
        <taxon>Batrachia</taxon>
        <taxon>Anura</taxon>
        <taxon>Pipoidea</taxon>
        <taxon>Pipidae</taxon>
        <taxon>Xenopodinae</taxon>
        <taxon>Xenopus</taxon>
        <taxon>Xenopus</taxon>
    </lineage>
</organism>
<evidence type="ECO:0000250" key="1">
    <source>
        <dbReference type="UniProtKB" id="Q9BRV8"/>
    </source>
</evidence>
<evidence type="ECO:0000255" key="2"/>
<evidence type="ECO:0000305" key="3"/>
<protein>
    <recommendedName>
        <fullName>Suppressor of IKBKE 1</fullName>
    </recommendedName>
    <alternativeName>
        <fullName>Suppressor of IKK-epsilon</fullName>
    </alternativeName>
</protein>
<feature type="chain" id="PRO_0000299055" description="Suppressor of IKBKE 1">
    <location>
        <begin position="1"/>
        <end position="205"/>
    </location>
</feature>
<feature type="coiled-coil region" evidence="2">
    <location>
        <begin position="4"/>
        <end position="32"/>
    </location>
</feature>
<feature type="coiled-coil region" evidence="2">
    <location>
        <begin position="154"/>
        <end position="192"/>
    </location>
</feature>